<feature type="chain" id="PRO_1000199891" description="Urease subunit gamma">
    <location>
        <begin position="1"/>
        <end position="100"/>
    </location>
</feature>
<comment type="catalytic activity">
    <reaction evidence="1">
        <text>urea + 2 H2O + H(+) = hydrogencarbonate + 2 NH4(+)</text>
        <dbReference type="Rhea" id="RHEA:20557"/>
        <dbReference type="ChEBI" id="CHEBI:15377"/>
        <dbReference type="ChEBI" id="CHEBI:15378"/>
        <dbReference type="ChEBI" id="CHEBI:16199"/>
        <dbReference type="ChEBI" id="CHEBI:17544"/>
        <dbReference type="ChEBI" id="CHEBI:28938"/>
        <dbReference type="EC" id="3.5.1.5"/>
    </reaction>
</comment>
<comment type="pathway">
    <text evidence="1">Nitrogen metabolism; urea degradation; CO(2) and NH(3) from urea (urease route): step 1/1.</text>
</comment>
<comment type="subunit">
    <text evidence="1">Heterotrimer of UreA (gamma), UreB (beta) and UreC (alpha) subunits. Three heterotrimers associate to form the active enzyme.</text>
</comment>
<comment type="subcellular location">
    <subcellularLocation>
        <location evidence="1">Cytoplasm</location>
    </subcellularLocation>
</comment>
<comment type="similarity">
    <text evidence="1">Belongs to the urease gamma subunit family.</text>
</comment>
<reference key="1">
    <citation type="submission" date="2008-02" db="EMBL/GenBank/DDBJ databases">
        <title>Complete sequence of Yersinia pseudotuberculosis YPIII.</title>
        <authorList>
            <consortium name="US DOE Joint Genome Institute"/>
            <person name="Copeland A."/>
            <person name="Lucas S."/>
            <person name="Lapidus A."/>
            <person name="Glavina del Rio T."/>
            <person name="Dalin E."/>
            <person name="Tice H."/>
            <person name="Bruce D."/>
            <person name="Goodwin L."/>
            <person name="Pitluck S."/>
            <person name="Munk A.C."/>
            <person name="Brettin T."/>
            <person name="Detter J.C."/>
            <person name="Han C."/>
            <person name="Tapia R."/>
            <person name="Schmutz J."/>
            <person name="Larimer F."/>
            <person name="Land M."/>
            <person name="Hauser L."/>
            <person name="Challacombe J.F."/>
            <person name="Green L."/>
            <person name="Lindler L.E."/>
            <person name="Nikolich M.P."/>
            <person name="Richardson P."/>
        </authorList>
    </citation>
    <scope>NUCLEOTIDE SEQUENCE [LARGE SCALE GENOMIC DNA]</scope>
    <source>
        <strain>YPIII</strain>
    </source>
</reference>
<gene>
    <name evidence="1" type="primary">ureA</name>
    <name type="ordered locus">YPK_1131</name>
</gene>
<dbReference type="EC" id="3.5.1.5" evidence="1"/>
<dbReference type="EMBL" id="CP000950">
    <property type="protein sequence ID" value="ACA67429.1"/>
    <property type="molecule type" value="Genomic_DNA"/>
</dbReference>
<dbReference type="RefSeq" id="WP_002215288.1">
    <property type="nucleotide sequence ID" value="NZ_CP009792.1"/>
</dbReference>
<dbReference type="SMR" id="B1JR69"/>
<dbReference type="KEGG" id="ypy:YPK_1131"/>
<dbReference type="PATRIC" id="fig|502800.11.peg.1765"/>
<dbReference type="UniPathway" id="UPA00258">
    <property type="reaction ID" value="UER00370"/>
</dbReference>
<dbReference type="GO" id="GO:0005737">
    <property type="term" value="C:cytoplasm"/>
    <property type="evidence" value="ECO:0007669"/>
    <property type="project" value="UniProtKB-SubCell"/>
</dbReference>
<dbReference type="GO" id="GO:0016151">
    <property type="term" value="F:nickel cation binding"/>
    <property type="evidence" value="ECO:0007669"/>
    <property type="project" value="InterPro"/>
</dbReference>
<dbReference type="GO" id="GO:0009039">
    <property type="term" value="F:urease activity"/>
    <property type="evidence" value="ECO:0007669"/>
    <property type="project" value="UniProtKB-UniRule"/>
</dbReference>
<dbReference type="GO" id="GO:0043419">
    <property type="term" value="P:urea catabolic process"/>
    <property type="evidence" value="ECO:0007669"/>
    <property type="project" value="UniProtKB-UniRule"/>
</dbReference>
<dbReference type="CDD" id="cd00390">
    <property type="entry name" value="Urease_gamma"/>
    <property type="match status" value="1"/>
</dbReference>
<dbReference type="Gene3D" id="3.30.280.10">
    <property type="entry name" value="Urease, gamma-like subunit"/>
    <property type="match status" value="1"/>
</dbReference>
<dbReference type="HAMAP" id="MF_00739">
    <property type="entry name" value="Urease_gamma"/>
    <property type="match status" value="1"/>
</dbReference>
<dbReference type="InterPro" id="IPR012010">
    <property type="entry name" value="Urease_gamma"/>
</dbReference>
<dbReference type="InterPro" id="IPR002026">
    <property type="entry name" value="Urease_gamma/gamma-beta_su"/>
</dbReference>
<dbReference type="InterPro" id="IPR036463">
    <property type="entry name" value="Urease_gamma_sf"/>
</dbReference>
<dbReference type="InterPro" id="IPR050069">
    <property type="entry name" value="Urease_subunit"/>
</dbReference>
<dbReference type="NCBIfam" id="NF009712">
    <property type="entry name" value="PRK13241.1"/>
    <property type="match status" value="1"/>
</dbReference>
<dbReference type="NCBIfam" id="TIGR00193">
    <property type="entry name" value="urease_gam"/>
    <property type="match status" value="1"/>
</dbReference>
<dbReference type="PANTHER" id="PTHR33569">
    <property type="entry name" value="UREASE"/>
    <property type="match status" value="1"/>
</dbReference>
<dbReference type="PANTHER" id="PTHR33569:SF1">
    <property type="entry name" value="UREASE"/>
    <property type="match status" value="1"/>
</dbReference>
<dbReference type="Pfam" id="PF00547">
    <property type="entry name" value="Urease_gamma"/>
    <property type="match status" value="1"/>
</dbReference>
<dbReference type="PIRSF" id="PIRSF001223">
    <property type="entry name" value="Urease_gamma"/>
    <property type="match status" value="1"/>
</dbReference>
<dbReference type="SUPFAM" id="SSF54111">
    <property type="entry name" value="Urease, gamma-subunit"/>
    <property type="match status" value="1"/>
</dbReference>
<organism>
    <name type="scientific">Yersinia pseudotuberculosis serotype O:3 (strain YPIII)</name>
    <dbReference type="NCBI Taxonomy" id="502800"/>
    <lineage>
        <taxon>Bacteria</taxon>
        <taxon>Pseudomonadati</taxon>
        <taxon>Pseudomonadota</taxon>
        <taxon>Gammaproteobacteria</taxon>
        <taxon>Enterobacterales</taxon>
        <taxon>Yersiniaceae</taxon>
        <taxon>Yersinia</taxon>
    </lineage>
</organism>
<name>URE3_YERPY</name>
<accession>B1JR69</accession>
<evidence type="ECO:0000255" key="1">
    <source>
        <dbReference type="HAMAP-Rule" id="MF_00739"/>
    </source>
</evidence>
<keyword id="KW-0963">Cytoplasm</keyword>
<keyword id="KW-0378">Hydrolase</keyword>
<protein>
    <recommendedName>
        <fullName evidence="1">Urease subunit gamma</fullName>
        <ecNumber evidence="1">3.5.1.5</ecNumber>
    </recommendedName>
    <alternativeName>
        <fullName evidence="1">Urea amidohydrolase subunit gamma</fullName>
    </alternativeName>
</protein>
<proteinExistence type="inferred from homology"/>
<sequence length="100" mass="11049">MQLTPREVEKLMIYTLSDVAFKRKARGLKLNYPEAVSIITVTAMEGARDGKSVEDVMKEASKVLTKDDVMDGVADLIPNVQVEAIFTDGSRLVTVHDPIK</sequence>